<comment type="function">
    <text evidence="2">Binds with high affinity to muscular (alpha-1/CHRNA1) and neuronal (alpha-7/CHRNA7) nicotinic acetylcholine receptor (nAChR) and inhibits acetylcholine from binding to the receptor, thereby impairing neuromuscular and neuronal transmission.</text>
</comment>
<comment type="subcellular location">
    <subcellularLocation>
        <location evidence="3">Secreted</location>
    </subcellularLocation>
</comment>
<comment type="tissue specificity">
    <text evidence="4">Expressed by the venom gland.</text>
</comment>
<comment type="similarity">
    <text evidence="4">Belongs to the three-finger toxin family. Long-chain subfamily. Type II alpha-neurotoxin sub-subfamily.</text>
</comment>
<keyword id="KW-0008">Acetylcholine receptor inhibiting toxin</keyword>
<keyword id="KW-1015">Disulfide bond</keyword>
<keyword id="KW-0872">Ion channel impairing toxin</keyword>
<keyword id="KW-0528">Neurotoxin</keyword>
<keyword id="KW-0629">Postsynaptic neurotoxin</keyword>
<keyword id="KW-0964">Secreted</keyword>
<keyword id="KW-0732">Signal</keyword>
<keyword id="KW-0800">Toxin</keyword>
<accession>F8J2D7</accession>
<feature type="signal peptide" evidence="1">
    <location>
        <begin position="1"/>
        <end position="21"/>
    </location>
</feature>
<feature type="chain" id="PRO_0000425526" description="Long neurotoxin 43">
    <location>
        <begin position="22"/>
        <end position="108"/>
    </location>
</feature>
<feature type="disulfide bond" evidence="1">
    <location>
        <begin position="24"/>
        <end position="42"/>
    </location>
</feature>
<feature type="disulfide bond" evidence="1">
    <location>
        <begin position="35"/>
        <end position="63"/>
    </location>
</feature>
<feature type="disulfide bond" evidence="1">
    <location>
        <begin position="48"/>
        <end position="52"/>
    </location>
</feature>
<feature type="disulfide bond" evidence="1">
    <location>
        <begin position="67"/>
        <end position="78"/>
    </location>
</feature>
<feature type="disulfide bond" evidence="1">
    <location>
        <begin position="79"/>
        <end position="84"/>
    </location>
</feature>
<evidence type="ECO:0000250" key="1"/>
<evidence type="ECO:0000250" key="2">
    <source>
        <dbReference type="UniProtKB" id="P60615"/>
    </source>
</evidence>
<evidence type="ECO:0000269" key="3">
    <source>
    </source>
</evidence>
<evidence type="ECO:0000305" key="4"/>
<name>3L243_DRYCN</name>
<protein>
    <recommendedName>
        <fullName>Long neurotoxin 43</fullName>
        <shortName>LNTX-43</shortName>
    </recommendedName>
</protein>
<organism>
    <name type="scientific">Drysdalia coronoides</name>
    <name type="common">White-lipped snake</name>
    <name type="synonym">Hoplocephalus coronoides</name>
    <dbReference type="NCBI Taxonomy" id="66186"/>
    <lineage>
        <taxon>Eukaryota</taxon>
        <taxon>Metazoa</taxon>
        <taxon>Chordata</taxon>
        <taxon>Craniata</taxon>
        <taxon>Vertebrata</taxon>
        <taxon>Euteleostomi</taxon>
        <taxon>Lepidosauria</taxon>
        <taxon>Squamata</taxon>
        <taxon>Bifurcata</taxon>
        <taxon>Unidentata</taxon>
        <taxon>Episquamata</taxon>
        <taxon>Toxicofera</taxon>
        <taxon>Serpentes</taxon>
        <taxon>Colubroidea</taxon>
        <taxon>Elapidae</taxon>
        <taxon>Notechinae</taxon>
        <taxon>Drysdalia</taxon>
    </lineage>
</organism>
<dbReference type="EMBL" id="FJ752455">
    <property type="protein sequence ID" value="ACR78477.1"/>
    <property type="molecule type" value="mRNA"/>
</dbReference>
<dbReference type="SMR" id="F8J2D7"/>
<dbReference type="TCDB" id="1.C.74.1.4">
    <property type="family name" value="the snake cytotoxin (sct) family"/>
</dbReference>
<dbReference type="GO" id="GO:0005576">
    <property type="term" value="C:extracellular region"/>
    <property type="evidence" value="ECO:0007669"/>
    <property type="project" value="UniProtKB-SubCell"/>
</dbReference>
<dbReference type="GO" id="GO:0030550">
    <property type="term" value="F:acetylcholine receptor inhibitor activity"/>
    <property type="evidence" value="ECO:0007669"/>
    <property type="project" value="UniProtKB-KW"/>
</dbReference>
<dbReference type="GO" id="GO:0099106">
    <property type="term" value="F:ion channel regulator activity"/>
    <property type="evidence" value="ECO:0007669"/>
    <property type="project" value="UniProtKB-KW"/>
</dbReference>
<dbReference type="GO" id="GO:0090729">
    <property type="term" value="F:toxin activity"/>
    <property type="evidence" value="ECO:0007669"/>
    <property type="project" value="UniProtKB-KW"/>
</dbReference>
<dbReference type="CDD" id="cd00206">
    <property type="entry name" value="TFP_snake_toxin"/>
    <property type="match status" value="1"/>
</dbReference>
<dbReference type="Gene3D" id="2.10.60.10">
    <property type="entry name" value="CD59"/>
    <property type="match status" value="1"/>
</dbReference>
<dbReference type="InterPro" id="IPR003571">
    <property type="entry name" value="Snake_3FTx"/>
</dbReference>
<dbReference type="InterPro" id="IPR045860">
    <property type="entry name" value="Snake_toxin-like_sf"/>
</dbReference>
<dbReference type="InterPro" id="IPR018354">
    <property type="entry name" value="Snake_toxin_con_site"/>
</dbReference>
<dbReference type="InterPro" id="IPR054131">
    <property type="entry name" value="Toxin_cobra-type"/>
</dbReference>
<dbReference type="Pfam" id="PF21947">
    <property type="entry name" value="Toxin_cobra-type"/>
    <property type="match status" value="1"/>
</dbReference>
<dbReference type="SUPFAM" id="SSF57302">
    <property type="entry name" value="Snake toxin-like"/>
    <property type="match status" value="1"/>
</dbReference>
<dbReference type="PROSITE" id="PS00272">
    <property type="entry name" value="SNAKE_TOXIN"/>
    <property type="match status" value="1"/>
</dbReference>
<proteinExistence type="evidence at protein level"/>
<reference key="1">
    <citation type="journal article" date="2011" name="J. Proteome Res.">
        <title>Identification of novel proteins from the venom of a cryptic snake Drysdalia coronoides by a combined transcriptomics and proteomics approach.</title>
        <authorList>
            <person name="Chatrath S.T."/>
            <person name="Chapeaurouge A."/>
            <person name="Lin Q."/>
            <person name="Lim T.K."/>
            <person name="Dunstan N."/>
            <person name="Mirtschin P."/>
            <person name="Kumar P.P."/>
            <person name="Kini R.M."/>
        </authorList>
    </citation>
    <scope>NUCLEOTIDE SEQUENCE [MRNA]</scope>
    <scope>IDENTIFICATION BY MASS SPECTROMETRY</scope>
    <scope>SUBCELLULAR LOCATION</scope>
    <source>
        <tissue>Venom</tissue>
        <tissue>Venom gland</tissue>
    </source>
</reference>
<sequence length="108" mass="12252">MKTLLLTLVVVTIVCLDLAYTRKCYKTHPYKSEPCAPGENLCYTKTWCDFRCSQLGKAVELGCAATCPTTKPYEEVTCCSTDDCNRFPNWERPRPRPRGLLSSIMDHP</sequence>